<keyword id="KW-0027">Amidation</keyword>
<keyword id="KW-1015">Disulfide bond</keyword>
<keyword id="KW-0872">Ion channel impairing toxin</keyword>
<keyword id="KW-0960">Knottin</keyword>
<keyword id="KW-0528">Neurotoxin</keyword>
<keyword id="KW-0638">Presynaptic neurotoxin</keyword>
<keyword id="KW-0964">Secreted</keyword>
<keyword id="KW-0732">Signal</keyword>
<keyword id="KW-0800">Toxin</keyword>
<keyword id="KW-0738">Voltage-gated sodium channel impairing toxin</keyword>
<proteinExistence type="evidence at transcript level"/>
<comment type="function">
    <text evidence="1">Insecticidal neurotoxin that induces an irreversible spastic paralysis when injected into insects. Modifies presynaptic voltage-gated sodium channels (Nav), causing them to open at the normal resting potential of the nerve. This leads to spontaneous release of neurotransmitter and repetitive action potentials in motor neurons (By similarity).</text>
</comment>
<comment type="subcellular location">
    <subcellularLocation>
        <location evidence="1">Secreted</location>
    </subcellularLocation>
</comment>
<comment type="tissue specificity">
    <text>Expressed by the venom gland.</text>
</comment>
<comment type="domain">
    <text evidence="1">The presence of a 'disulfide through disulfide knot' structurally defines this protein as a knottin.</text>
</comment>
<comment type="similarity">
    <text evidence="5">Belongs to the neurotoxin 07 (Beta/delta-agtx) family. 03 (aga-4) subfamily. Aga sub-subfamily.</text>
</comment>
<feature type="signal peptide" evidence="4">
    <location>
        <begin position="1"/>
        <end position="20"/>
    </location>
</feature>
<feature type="propeptide" id="PRO_5000093671" evidence="6">
    <location>
        <begin position="21"/>
        <end position="34"/>
    </location>
</feature>
<feature type="chain" id="PRO_5000093672" description="U3-agatoxin-Ao1i" evidence="6">
    <location>
        <begin position="35"/>
        <end position="71"/>
    </location>
</feature>
<feature type="modified residue" description="Serine amide" evidence="3">
    <location>
        <position position="71"/>
    </location>
</feature>
<feature type="disulfide bond" evidence="2">
    <location>
        <begin position="36"/>
        <end position="52"/>
    </location>
</feature>
<feature type="disulfide bond" evidence="2">
    <location>
        <begin position="43"/>
        <end position="57"/>
    </location>
</feature>
<feature type="disulfide bond" evidence="2">
    <location>
        <begin position="51"/>
        <end position="67"/>
    </location>
</feature>
<feature type="disulfide bond" evidence="2">
    <location>
        <begin position="59"/>
        <end position="65"/>
    </location>
</feature>
<evidence type="ECO:0000250" key="1"/>
<evidence type="ECO:0000250" key="2">
    <source>
        <dbReference type="UniProtKB" id="P11061"/>
    </source>
</evidence>
<evidence type="ECO:0000250" key="3">
    <source>
        <dbReference type="UniProtKB" id="Q5Y4V6"/>
    </source>
</evidence>
<evidence type="ECO:0000255" key="4"/>
<evidence type="ECO:0000305" key="5"/>
<evidence type="ECO:0000305" key="6">
    <source>
    </source>
</evidence>
<evidence type="ECO:0000312" key="7">
    <source>
        <dbReference type="EMBL" id="AAU87894.1"/>
    </source>
</evidence>
<dbReference type="EMBL" id="AY681334">
    <property type="protein sequence ID" value="AAU87894.1"/>
    <property type="molecule type" value="mRNA"/>
</dbReference>
<dbReference type="SMR" id="Q5Y4V0"/>
<dbReference type="ArachnoServer" id="AS000078">
    <property type="toxin name" value="U3-agatoxin-Ao1i"/>
</dbReference>
<dbReference type="GO" id="GO:0005576">
    <property type="term" value="C:extracellular region"/>
    <property type="evidence" value="ECO:0007669"/>
    <property type="project" value="UniProtKB-SubCell"/>
</dbReference>
<dbReference type="GO" id="GO:0044231">
    <property type="term" value="C:host cell presynaptic membrane"/>
    <property type="evidence" value="ECO:0007669"/>
    <property type="project" value="UniProtKB-KW"/>
</dbReference>
<dbReference type="GO" id="GO:0017080">
    <property type="term" value="F:sodium channel regulator activity"/>
    <property type="evidence" value="ECO:0007669"/>
    <property type="project" value="UniProtKB-KW"/>
</dbReference>
<dbReference type="GO" id="GO:0090729">
    <property type="term" value="F:toxin activity"/>
    <property type="evidence" value="ECO:0007669"/>
    <property type="project" value="UniProtKB-KW"/>
</dbReference>
<dbReference type="InterPro" id="IPR016328">
    <property type="entry name" value="Beta/delta-agatoxin_fam"/>
</dbReference>
<dbReference type="Pfam" id="PF05980">
    <property type="entry name" value="Toxin_7"/>
    <property type="match status" value="1"/>
</dbReference>
<dbReference type="SUPFAM" id="SSF57059">
    <property type="entry name" value="omega toxin-like"/>
    <property type="match status" value="1"/>
</dbReference>
<dbReference type="PROSITE" id="PS60015">
    <property type="entry name" value="MU_AGATOXIN"/>
    <property type="match status" value="1"/>
</dbReference>
<sequence>MRTIISLLLLSAMVFAEIEAISLEEGLQLFEGERGCVGENQQCANWAGPHCCSGYYCTCRYFPKCICRKDSGK</sequence>
<name>T4G1I_AGEOR</name>
<protein>
    <recommendedName>
        <fullName evidence="5">U3-agatoxin-Ao1i</fullName>
        <shortName evidence="5">U3-AGTX-Ao1i</shortName>
    </recommendedName>
    <alternativeName>
        <fullName evidence="7">Mu-2Aaga_10</fullName>
    </alternativeName>
</protein>
<organism>
    <name type="scientific">Agelena orientalis</name>
    <name type="common">Funnel-web spider</name>
    <dbReference type="NCBI Taxonomy" id="293813"/>
    <lineage>
        <taxon>Eukaryota</taxon>
        <taxon>Metazoa</taxon>
        <taxon>Ecdysozoa</taxon>
        <taxon>Arthropoda</taxon>
        <taxon>Chelicerata</taxon>
        <taxon>Arachnida</taxon>
        <taxon>Araneae</taxon>
        <taxon>Araneomorphae</taxon>
        <taxon>Entelegynae</taxon>
        <taxon>Agelenidae</taxon>
        <taxon>Agelena</taxon>
    </lineage>
</organism>
<reference key="1">
    <citation type="journal article" date="2005" name="Proteins">
        <title>A novel strategy for the identification of toxinlike structures in spider venom.</title>
        <authorList>
            <person name="Kozlov S.A."/>
            <person name="Malyavka A."/>
            <person name="McCutchen B."/>
            <person name="Lu A."/>
            <person name="Schepers E."/>
            <person name="Herrmann R."/>
            <person name="Grishin E.V."/>
        </authorList>
    </citation>
    <scope>NUCLEOTIDE SEQUENCE [MRNA]</scope>
    <source>
        <tissue>Venom gland</tissue>
    </source>
</reference>
<accession>Q5Y4V0</accession>